<protein>
    <recommendedName>
        <fullName>Cytochrome b</fullName>
    </recommendedName>
    <alternativeName>
        <fullName>Complex III subunit 3</fullName>
    </alternativeName>
    <alternativeName>
        <fullName>Complex III subunit III</fullName>
    </alternativeName>
    <alternativeName>
        <fullName>Cytochrome b-c1 complex subunit 3</fullName>
    </alternativeName>
    <alternativeName>
        <fullName>Ubiquinol-cytochrome-c reductase complex cytochrome b subunit</fullName>
    </alternativeName>
</protein>
<gene>
    <name type="primary">MT-CYB</name>
    <name type="synonym">COB</name>
    <name type="synonym">CYTB</name>
    <name type="synonym">MTCYB</name>
</gene>
<organism>
    <name type="scientific">Casuarius bennetti</name>
    <name type="common">Dwarf cassowary</name>
    <dbReference type="NCBI Taxonomy" id="30463"/>
    <lineage>
        <taxon>Eukaryota</taxon>
        <taxon>Metazoa</taxon>
        <taxon>Chordata</taxon>
        <taxon>Craniata</taxon>
        <taxon>Vertebrata</taxon>
        <taxon>Euteleostomi</taxon>
        <taxon>Archelosauria</taxon>
        <taxon>Archosauria</taxon>
        <taxon>Dinosauria</taxon>
        <taxon>Saurischia</taxon>
        <taxon>Theropoda</taxon>
        <taxon>Coelurosauria</taxon>
        <taxon>Aves</taxon>
        <taxon>Palaeognathae</taxon>
        <taxon>Casuariiformes</taxon>
        <taxon>Casuariidae</taxon>
        <taxon>Casuarius</taxon>
    </lineage>
</organism>
<keyword id="KW-0249">Electron transport</keyword>
<keyword id="KW-0349">Heme</keyword>
<keyword id="KW-0408">Iron</keyword>
<keyword id="KW-0472">Membrane</keyword>
<keyword id="KW-0479">Metal-binding</keyword>
<keyword id="KW-0496">Mitochondrion</keyword>
<keyword id="KW-0999">Mitochondrion inner membrane</keyword>
<keyword id="KW-0679">Respiratory chain</keyword>
<keyword id="KW-0812">Transmembrane</keyword>
<keyword id="KW-1133">Transmembrane helix</keyword>
<keyword id="KW-0813">Transport</keyword>
<keyword id="KW-0830">Ubiquinone</keyword>
<evidence type="ECO:0000250" key="1"/>
<evidence type="ECO:0000250" key="2">
    <source>
        <dbReference type="UniProtKB" id="P00157"/>
    </source>
</evidence>
<evidence type="ECO:0000255" key="3">
    <source>
        <dbReference type="PROSITE-ProRule" id="PRU00967"/>
    </source>
</evidence>
<evidence type="ECO:0000255" key="4">
    <source>
        <dbReference type="PROSITE-ProRule" id="PRU00968"/>
    </source>
</evidence>
<geneLocation type="mitochondrion"/>
<comment type="function">
    <text evidence="2">Component of the ubiquinol-cytochrome c reductase complex (complex III or cytochrome b-c1 complex) that is part of the mitochondrial respiratory chain. The b-c1 complex mediates electron transfer from ubiquinol to cytochrome c. Contributes to the generation of a proton gradient across the mitochondrial membrane that is then used for ATP synthesis.</text>
</comment>
<comment type="cofactor">
    <cofactor evidence="2">
        <name>heme b</name>
        <dbReference type="ChEBI" id="CHEBI:60344"/>
    </cofactor>
    <text evidence="2">Binds 2 heme b groups non-covalently.</text>
</comment>
<comment type="subunit">
    <text evidence="2">The cytochrome bc1 complex contains 11 subunits: 3 respiratory subunits (MT-CYB, CYC1 and UQCRFS1), 2 core proteins (UQCRC1 and UQCRC2) and 6 low-molecular weight proteins (UQCRH/QCR6, UQCRB/QCR7, UQCRQ/QCR8, UQCR10/QCR9, UQCR11/QCR10 and a cleavage product of UQCRFS1). This cytochrome bc1 complex then forms a dimer.</text>
</comment>
<comment type="subcellular location">
    <subcellularLocation>
        <location evidence="2">Mitochondrion inner membrane</location>
        <topology evidence="2">Multi-pass membrane protein</topology>
    </subcellularLocation>
</comment>
<comment type="miscellaneous">
    <text evidence="1">Heme 1 (or BL or b562) is low-potential and absorbs at about 562 nm, and heme 2 (or BH or b566) is high-potential and absorbs at about 566 nm.</text>
</comment>
<comment type="similarity">
    <text evidence="3 4">Belongs to the cytochrome b family.</text>
</comment>
<comment type="caution">
    <text evidence="2">The full-length protein contains only eight transmembrane helices, not nine as predicted by bioinformatics tools.</text>
</comment>
<name>CYB_CASBE</name>
<dbReference type="EMBL" id="U76051">
    <property type="protein sequence ID" value="AAB61315.1"/>
    <property type="molecule type" value="Genomic_DNA"/>
</dbReference>
<dbReference type="SMR" id="O03520"/>
<dbReference type="GO" id="GO:0005743">
    <property type="term" value="C:mitochondrial inner membrane"/>
    <property type="evidence" value="ECO:0007669"/>
    <property type="project" value="UniProtKB-SubCell"/>
</dbReference>
<dbReference type="GO" id="GO:0045275">
    <property type="term" value="C:respiratory chain complex III"/>
    <property type="evidence" value="ECO:0007669"/>
    <property type="project" value="InterPro"/>
</dbReference>
<dbReference type="GO" id="GO:0046872">
    <property type="term" value="F:metal ion binding"/>
    <property type="evidence" value="ECO:0007669"/>
    <property type="project" value="UniProtKB-KW"/>
</dbReference>
<dbReference type="GO" id="GO:0008121">
    <property type="term" value="F:ubiquinol-cytochrome-c reductase activity"/>
    <property type="evidence" value="ECO:0007669"/>
    <property type="project" value="InterPro"/>
</dbReference>
<dbReference type="GO" id="GO:0006122">
    <property type="term" value="P:mitochondrial electron transport, ubiquinol to cytochrome c"/>
    <property type="evidence" value="ECO:0007669"/>
    <property type="project" value="TreeGrafter"/>
</dbReference>
<dbReference type="CDD" id="cd00290">
    <property type="entry name" value="cytochrome_b_C"/>
    <property type="match status" value="1"/>
</dbReference>
<dbReference type="CDD" id="cd00284">
    <property type="entry name" value="Cytochrome_b_N"/>
    <property type="match status" value="1"/>
</dbReference>
<dbReference type="FunFam" id="1.20.810.10:FF:000002">
    <property type="entry name" value="Cytochrome b"/>
    <property type="match status" value="1"/>
</dbReference>
<dbReference type="Gene3D" id="1.20.810.10">
    <property type="entry name" value="Cytochrome Bc1 Complex, Chain C"/>
    <property type="match status" value="1"/>
</dbReference>
<dbReference type="InterPro" id="IPR005798">
    <property type="entry name" value="Cyt_b/b6_C"/>
</dbReference>
<dbReference type="InterPro" id="IPR036150">
    <property type="entry name" value="Cyt_b/b6_C_sf"/>
</dbReference>
<dbReference type="InterPro" id="IPR005797">
    <property type="entry name" value="Cyt_b/b6_N"/>
</dbReference>
<dbReference type="InterPro" id="IPR027387">
    <property type="entry name" value="Cytb/b6-like_sf"/>
</dbReference>
<dbReference type="InterPro" id="IPR030689">
    <property type="entry name" value="Cytochrome_b"/>
</dbReference>
<dbReference type="InterPro" id="IPR048260">
    <property type="entry name" value="Cytochrome_b_C_euk/bac"/>
</dbReference>
<dbReference type="InterPro" id="IPR048259">
    <property type="entry name" value="Cytochrome_b_N_euk/bac"/>
</dbReference>
<dbReference type="InterPro" id="IPR016174">
    <property type="entry name" value="Di-haem_cyt_TM"/>
</dbReference>
<dbReference type="PANTHER" id="PTHR19271">
    <property type="entry name" value="CYTOCHROME B"/>
    <property type="match status" value="1"/>
</dbReference>
<dbReference type="PANTHER" id="PTHR19271:SF16">
    <property type="entry name" value="CYTOCHROME B"/>
    <property type="match status" value="1"/>
</dbReference>
<dbReference type="Pfam" id="PF00032">
    <property type="entry name" value="Cytochrom_B_C"/>
    <property type="match status" value="1"/>
</dbReference>
<dbReference type="Pfam" id="PF00033">
    <property type="entry name" value="Cytochrome_B"/>
    <property type="match status" value="1"/>
</dbReference>
<dbReference type="PIRSF" id="PIRSF038885">
    <property type="entry name" value="COB"/>
    <property type="match status" value="1"/>
</dbReference>
<dbReference type="SUPFAM" id="SSF81648">
    <property type="entry name" value="a domain/subunit of cytochrome bc1 complex (Ubiquinol-cytochrome c reductase)"/>
    <property type="match status" value="1"/>
</dbReference>
<dbReference type="SUPFAM" id="SSF81342">
    <property type="entry name" value="Transmembrane di-heme cytochromes"/>
    <property type="match status" value="1"/>
</dbReference>
<dbReference type="PROSITE" id="PS51003">
    <property type="entry name" value="CYTB_CTER"/>
    <property type="match status" value="1"/>
</dbReference>
<dbReference type="PROSITE" id="PS51002">
    <property type="entry name" value="CYTB_NTER"/>
    <property type="match status" value="1"/>
</dbReference>
<reference key="1">
    <citation type="book" date="1997" name="Avian molecular evolution and systematics">
        <title>Phylogenetic relationships of the ratite birds: resolving conflicts between molecular and morphological data sets.</title>
        <editorList>
            <person name="Mindell D.P."/>
        </editorList>
        <authorList>
            <person name="Lee K."/>
            <person name="Feinstein J."/>
            <person name="Cracraft J."/>
        </authorList>
    </citation>
    <scope>NUCLEOTIDE SEQUENCE [GENOMIC DNA]</scope>
</reference>
<proteinExistence type="inferred from homology"/>
<sequence length="379" mass="42763">MAPNIRKSHPLLKIINSSLIDLPSPSNISTWWNFGSLLGICLITQILTGLLLAMHYTADTSLAFSSVAHTCRNVQYGWLIRNLHANGASFFFICIYLHIGRGFYYGSYLYKETWNTGVILLLTLMATAFVGYVLPWGQMSFWGATVITNLFSAIPYIGQTLVEWAWGGFSVDNPTLTRFFALHFLLPFLIAGITLIHLTFLHESGSNNPLGIVSHCDKIPFHPYFSLKDILGFTLMFIPLLILAFFSPNFLGDPENFTPANPLVTPPHIKPEWYFLFAYAILRSIPNKLGGVLALAASVLILFLIPFLHKSKQRSMTFRPLSQVLFWFLVANLLILTWIGSQPVEHPFIIIGQMASFTYFLILLILFPTIGDLENKMLY</sequence>
<feature type="chain" id="PRO_0000060739" description="Cytochrome b">
    <location>
        <begin position="1"/>
        <end position="379"/>
    </location>
</feature>
<feature type="transmembrane region" description="Helical" evidence="2">
    <location>
        <begin position="34"/>
        <end position="54"/>
    </location>
</feature>
<feature type="transmembrane region" description="Helical" evidence="2">
    <location>
        <begin position="78"/>
        <end position="99"/>
    </location>
</feature>
<feature type="transmembrane region" description="Helical" evidence="2">
    <location>
        <begin position="114"/>
        <end position="134"/>
    </location>
</feature>
<feature type="transmembrane region" description="Helical" evidence="2">
    <location>
        <begin position="179"/>
        <end position="199"/>
    </location>
</feature>
<feature type="transmembrane region" description="Helical" evidence="2">
    <location>
        <begin position="227"/>
        <end position="247"/>
    </location>
</feature>
<feature type="transmembrane region" description="Helical" evidence="2">
    <location>
        <begin position="289"/>
        <end position="309"/>
    </location>
</feature>
<feature type="transmembrane region" description="Helical" evidence="2">
    <location>
        <begin position="321"/>
        <end position="341"/>
    </location>
</feature>
<feature type="transmembrane region" description="Helical" evidence="2">
    <location>
        <begin position="348"/>
        <end position="368"/>
    </location>
</feature>
<feature type="binding site" description="axial binding residue" evidence="2">
    <location>
        <position position="84"/>
    </location>
    <ligand>
        <name>heme b</name>
        <dbReference type="ChEBI" id="CHEBI:60344"/>
        <label>b562</label>
    </ligand>
    <ligandPart>
        <name>Fe</name>
        <dbReference type="ChEBI" id="CHEBI:18248"/>
    </ligandPart>
</feature>
<feature type="binding site" description="axial binding residue" evidence="2">
    <location>
        <position position="98"/>
    </location>
    <ligand>
        <name>heme b</name>
        <dbReference type="ChEBI" id="CHEBI:60344"/>
        <label>b566</label>
    </ligand>
    <ligandPart>
        <name>Fe</name>
        <dbReference type="ChEBI" id="CHEBI:18248"/>
    </ligandPart>
</feature>
<feature type="binding site" description="axial binding residue" evidence="2">
    <location>
        <position position="183"/>
    </location>
    <ligand>
        <name>heme b</name>
        <dbReference type="ChEBI" id="CHEBI:60344"/>
        <label>b562</label>
    </ligand>
    <ligandPart>
        <name>Fe</name>
        <dbReference type="ChEBI" id="CHEBI:18248"/>
    </ligandPart>
</feature>
<feature type="binding site" description="axial binding residue" evidence="2">
    <location>
        <position position="197"/>
    </location>
    <ligand>
        <name>heme b</name>
        <dbReference type="ChEBI" id="CHEBI:60344"/>
        <label>b566</label>
    </ligand>
    <ligandPart>
        <name>Fe</name>
        <dbReference type="ChEBI" id="CHEBI:18248"/>
    </ligandPart>
</feature>
<feature type="binding site" evidence="2">
    <location>
        <position position="202"/>
    </location>
    <ligand>
        <name>a ubiquinone</name>
        <dbReference type="ChEBI" id="CHEBI:16389"/>
    </ligand>
</feature>
<accession>O03520</accession>